<dbReference type="EMBL" id="U53455">
    <property type="protein sequence ID" value="AAB03317.1"/>
    <property type="molecule type" value="mRNA"/>
</dbReference>
<dbReference type="PDB" id="8G1U">
    <property type="method" value="EM"/>
    <property type="resolution" value="2.83 A"/>
    <property type="chains" value="C/G/K/O=1-236"/>
</dbReference>
<dbReference type="PDBsum" id="8G1U"/>
<dbReference type="EMDB" id="EMD-29677"/>
<dbReference type="SMR" id="Q61189"/>
<dbReference type="ComplexPortal" id="CPX-1023">
    <property type="entry name" value="Methylosome"/>
</dbReference>
<dbReference type="FunCoup" id="Q61189">
    <property type="interactions" value="2594"/>
</dbReference>
<dbReference type="IntAct" id="Q61189">
    <property type="interactions" value="1"/>
</dbReference>
<dbReference type="MINT" id="Q61189"/>
<dbReference type="STRING" id="10090.ENSMUSP00000026506"/>
<dbReference type="GlyGen" id="Q61189">
    <property type="glycosylation" value="1 site"/>
</dbReference>
<dbReference type="iPTMnet" id="Q61189"/>
<dbReference type="PhosphoSitePlus" id="Q61189"/>
<dbReference type="jPOST" id="Q61189"/>
<dbReference type="PaxDb" id="10090-ENSMUSP00000026506"/>
<dbReference type="PeptideAtlas" id="Q61189"/>
<dbReference type="ProteomicsDB" id="273085"/>
<dbReference type="Pumba" id="Q61189"/>
<dbReference type="AGR" id="MGI:109638"/>
<dbReference type="MGI" id="MGI:109638">
    <property type="gene designation" value="Clns1a"/>
</dbReference>
<dbReference type="eggNOG" id="KOG3238">
    <property type="taxonomic scope" value="Eukaryota"/>
</dbReference>
<dbReference type="InParanoid" id="Q61189"/>
<dbReference type="Reactome" id="R-MMU-191859">
    <property type="pathway name" value="snRNP Assembly"/>
</dbReference>
<dbReference type="ChiTaRS" id="Clns1a">
    <property type="organism name" value="mouse"/>
</dbReference>
<dbReference type="PRO" id="PR:Q61189"/>
<dbReference type="Proteomes" id="UP000000589">
    <property type="component" value="Unplaced"/>
</dbReference>
<dbReference type="RNAct" id="Q61189">
    <property type="molecule type" value="protein"/>
</dbReference>
<dbReference type="GO" id="GO:0005856">
    <property type="term" value="C:cytoskeleton"/>
    <property type="evidence" value="ECO:0007669"/>
    <property type="project" value="UniProtKB-SubCell"/>
</dbReference>
<dbReference type="GO" id="GO:0005829">
    <property type="term" value="C:cytosol"/>
    <property type="evidence" value="ECO:0000250"/>
    <property type="project" value="UniProtKB"/>
</dbReference>
<dbReference type="GO" id="GO:0034709">
    <property type="term" value="C:methylosome"/>
    <property type="evidence" value="ECO:0000250"/>
    <property type="project" value="UniProtKB"/>
</dbReference>
<dbReference type="GO" id="GO:0005634">
    <property type="term" value="C:nucleus"/>
    <property type="evidence" value="ECO:0000250"/>
    <property type="project" value="UniProtKB"/>
</dbReference>
<dbReference type="GO" id="GO:0034715">
    <property type="term" value="C:pICln-Sm protein complex"/>
    <property type="evidence" value="ECO:0000250"/>
    <property type="project" value="UniProtKB"/>
</dbReference>
<dbReference type="GO" id="GO:0005886">
    <property type="term" value="C:plasma membrane"/>
    <property type="evidence" value="ECO:0007669"/>
    <property type="project" value="InterPro"/>
</dbReference>
<dbReference type="GO" id="GO:0006821">
    <property type="term" value="P:chloride transport"/>
    <property type="evidence" value="ECO:0007669"/>
    <property type="project" value="InterPro"/>
</dbReference>
<dbReference type="GO" id="GO:0045794">
    <property type="term" value="P:negative regulation of cell volume"/>
    <property type="evidence" value="ECO:0000316"/>
    <property type="project" value="CAFA"/>
</dbReference>
<dbReference type="GO" id="GO:0048026">
    <property type="term" value="P:positive regulation of mRNA splicing, via spliceosome"/>
    <property type="evidence" value="ECO:0000303"/>
    <property type="project" value="ComplexPortal"/>
</dbReference>
<dbReference type="GO" id="GO:0000387">
    <property type="term" value="P:spliceosomal snRNP assembly"/>
    <property type="evidence" value="ECO:0000250"/>
    <property type="project" value="UniProtKB"/>
</dbReference>
<dbReference type="FunFam" id="2.30.29.30:FF:000220">
    <property type="entry name" value="methylosome subunit pICln isoform X1"/>
    <property type="match status" value="1"/>
</dbReference>
<dbReference type="Gene3D" id="2.30.29.30">
    <property type="entry name" value="Pleckstrin-homology domain (PH domain)/Phosphotyrosine-binding domain (PTB)"/>
    <property type="match status" value="1"/>
</dbReference>
<dbReference type="InterPro" id="IPR003521">
    <property type="entry name" value="ICln"/>
</dbReference>
<dbReference type="InterPro" id="IPR039924">
    <property type="entry name" value="ICln/Lot5/Saf5"/>
</dbReference>
<dbReference type="InterPro" id="IPR011993">
    <property type="entry name" value="PH-like_dom_sf"/>
</dbReference>
<dbReference type="PANTHER" id="PTHR21399">
    <property type="entry name" value="CHLORIDE CONDUCTANCE REGULATORY PROTEIN ICLN"/>
    <property type="match status" value="1"/>
</dbReference>
<dbReference type="PANTHER" id="PTHR21399:SF0">
    <property type="entry name" value="METHYLOSOME SUBUNIT PICLN"/>
    <property type="match status" value="1"/>
</dbReference>
<dbReference type="Pfam" id="PF03517">
    <property type="entry name" value="Voldacs"/>
    <property type="match status" value="1"/>
</dbReference>
<dbReference type="PRINTS" id="PR01348">
    <property type="entry name" value="ICLNCHANNEL"/>
</dbReference>
<name>ICLN_MOUSE</name>
<organism>
    <name type="scientific">Mus musculus</name>
    <name type="common">Mouse</name>
    <dbReference type="NCBI Taxonomy" id="10090"/>
    <lineage>
        <taxon>Eukaryota</taxon>
        <taxon>Metazoa</taxon>
        <taxon>Chordata</taxon>
        <taxon>Craniata</taxon>
        <taxon>Vertebrata</taxon>
        <taxon>Euteleostomi</taxon>
        <taxon>Mammalia</taxon>
        <taxon>Eutheria</taxon>
        <taxon>Euarchontoglires</taxon>
        <taxon>Glires</taxon>
        <taxon>Rodentia</taxon>
        <taxon>Myomorpha</taxon>
        <taxon>Muroidea</taxon>
        <taxon>Muridae</taxon>
        <taxon>Murinae</taxon>
        <taxon>Mus</taxon>
        <taxon>Mus</taxon>
    </lineage>
</organism>
<feature type="initiator methionine" description="Removed" evidence="1">
    <location>
        <position position="1"/>
    </location>
</feature>
<feature type="chain" id="PRO_0000185156" description="Methylosome subunit pICln">
    <location>
        <begin position="2"/>
        <end position="236"/>
    </location>
</feature>
<feature type="region of interest" description="Disordered" evidence="3">
    <location>
        <begin position="88"/>
        <end position="109"/>
    </location>
</feature>
<feature type="compositionally biased region" description="Acidic residues" evidence="3">
    <location>
        <begin position="95"/>
        <end position="107"/>
    </location>
</feature>
<feature type="modified residue" description="N-acetylserine" evidence="1">
    <location>
        <position position="2"/>
    </location>
</feature>
<feature type="modified residue" description="Phosphoserine" evidence="2">
    <location>
        <position position="95"/>
    </location>
</feature>
<feature type="modified residue" description="Phosphoserine" evidence="1">
    <location>
        <position position="143"/>
    </location>
</feature>
<feature type="modified residue" description="Phosphoserine" evidence="1">
    <location>
        <position position="192"/>
    </location>
</feature>
<feature type="modified residue" description="Phosphoserine" evidence="1">
    <location>
        <position position="194"/>
    </location>
</feature>
<feature type="modified residue" description="Phosphoserine" evidence="1">
    <location>
        <position position="197"/>
    </location>
</feature>
<feature type="modified residue" description="Phosphoserine" evidence="1">
    <location>
        <position position="209"/>
    </location>
</feature>
<feature type="modified residue" description="Phosphothreonine" evidence="1">
    <location>
        <position position="222"/>
    </location>
</feature>
<keyword id="KW-0002">3D-structure</keyword>
<keyword id="KW-0007">Acetylation</keyword>
<keyword id="KW-0963">Cytoplasm</keyword>
<keyword id="KW-0206">Cytoskeleton</keyword>
<keyword id="KW-0507">mRNA processing</keyword>
<keyword id="KW-0508">mRNA splicing</keyword>
<keyword id="KW-0539">Nucleus</keyword>
<keyword id="KW-0597">Phosphoprotein</keyword>
<keyword id="KW-1185">Reference proteome</keyword>
<proteinExistence type="evidence at protein level"/>
<reference key="1">
    <citation type="submission" date="1996-04" db="EMBL/GenBank/DDBJ databases">
        <title>Colocalization of CLCI and CLCN3 to human 4q32 and mouse 8: the candidate region for tottering (tg).</title>
        <authorList>
            <person name="Lamb F.S."/>
            <person name="Mathews K."/>
            <person name="Mills K."/>
            <person name="Barna T."/>
            <person name="Pruessner J."/>
            <person name="Kresnicka L.S."/>
            <person name="Schutte B.C."/>
        </authorList>
    </citation>
    <scope>NUCLEOTIDE SEQUENCE [MRNA]</scope>
</reference>
<reference key="2">
    <citation type="journal article" date="2010" name="Cell">
        <title>A tissue-specific atlas of mouse protein phosphorylation and expression.</title>
        <authorList>
            <person name="Huttlin E.L."/>
            <person name="Jedrychowski M.P."/>
            <person name="Elias J.E."/>
            <person name="Goswami T."/>
            <person name="Rad R."/>
            <person name="Beausoleil S.A."/>
            <person name="Villen J."/>
            <person name="Haas W."/>
            <person name="Sowa M.E."/>
            <person name="Gygi S.P."/>
        </authorList>
    </citation>
    <scope>IDENTIFICATION BY MASS SPECTROMETRY [LARGE SCALE ANALYSIS]</scope>
    <source>
        <tissue>Brain</tissue>
        <tissue>Heart</tissue>
        <tissue>Kidney</tissue>
        <tissue>Liver</tissue>
        <tissue>Lung</tissue>
        <tissue>Pancreas</tissue>
        <tissue>Spleen</tissue>
        <tissue>Testis</tissue>
    </source>
</reference>
<protein>
    <recommendedName>
        <fullName>Methylosome subunit pICln</fullName>
    </recommendedName>
    <alternativeName>
        <fullName>Chloride channel, nucleotide sensitive 1A</fullName>
    </alternativeName>
    <alternativeName>
        <fullName>Chloride conductance regulatory protein ICln</fullName>
        <shortName>I(Cln)</shortName>
    </alternativeName>
    <alternativeName>
        <fullName>Chloride ion current inducer protein</fullName>
        <shortName>ClCI</shortName>
    </alternativeName>
</protein>
<comment type="function">
    <text evidence="1">Involved in both the assembly of spliceosomal snRNPs and the methylation of Sm proteins (By similarity). Chaperone that regulates the assembly of spliceosomal U1, U2, U4 and U5 small nuclear ribonucleoproteins (snRNPs), the building blocks of the spliceosome, and thereby plays an important role in the splicing of cellular pre-mRNAs (By similarity). Most spliceosomal snRNPs contain a common set of Sm proteins SNRPB, SNRPD1, SNRPD2, SNRPD3, SNRPE, SNRPF and SNRPG that assemble in a heptameric protein ring on the Sm site of the small nuclear RNA to form the core snRNP (Sm core) (By similarity). In the cytosol, the Sm proteins SNRPD1, SNRPD2, SNRPE, SNRPF and SNRPG are trapped in an inactive 6S pICln-Sm complex by the chaperone CLNS1A that controls the assembly of the core snRNP (By similarity). Dissociation by the SMN complex of CLNS1A from the trapped Sm proteins and their transfer to an SMN-Sm complex triggers the assembly of core snRNPs and their transport to the nucleus (By similarity).</text>
</comment>
<comment type="subunit">
    <text evidence="1">Component of the methylosome, a 20S complex containing at least PRMT5/SKB1, WDR77/MEP50 and CLNS1A/pICln. May mediate SNRPD1 and SNRPD3 methylation. Forms a 6S pICln-Sm complex composed of CLNS1A/pICln, SNRPD1, SNRPD2, SNRPE, SNRPF and SNRPG; ring-like structure where CLNS1A/pICln mimics additional Sm proteins and which is unable to assemble into the core snRNP. Interacts with LSM10 and LSM11.</text>
</comment>
<comment type="subcellular location">
    <subcellularLocation>
        <location evidence="1">Cytoplasm</location>
        <location evidence="1">Cytosol</location>
    </subcellularLocation>
    <subcellularLocation>
        <location evidence="1">Nucleus</location>
    </subcellularLocation>
    <subcellularLocation>
        <location evidence="1">Cytoplasm</location>
        <location evidence="1">Cytoskeleton</location>
    </subcellularLocation>
    <text evidence="1">A small fraction is also associated with the cytoskeleton.</text>
</comment>
<comment type="similarity">
    <text evidence="4">Belongs to the pICln (TC 1.A.47) family.</text>
</comment>
<gene>
    <name type="primary">Clns1a</name>
    <name type="synonym">Clci</name>
    <name type="synonym">Clcni</name>
</gene>
<sequence>MSFLKSFPPPGSADGLRLQQPDTEAVLNGKGLGTGTLYIAESRLSWLDGSGLGFSLEYPTISLHAVSRDPNAYPQEHLYVMVNAKLGEESKEPPSDEDEEDNDDIEPISEFRFVPSDKSALEAMFTAMCECQALHPDPEDEDSDDYDGEEYDVEAHEQGQGDIPTFYTYEEGLSHLTAEGQATLERLEGMLSQSVSSQYNMAGVRTEDSVRNYEDGMEVETTPTVAGQFEDADVDH</sequence>
<accession>Q61189</accession>
<evidence type="ECO:0000250" key="1">
    <source>
        <dbReference type="UniProtKB" id="P54105"/>
    </source>
</evidence>
<evidence type="ECO:0000250" key="2">
    <source>
        <dbReference type="UniProtKB" id="Q04753"/>
    </source>
</evidence>
<evidence type="ECO:0000256" key="3">
    <source>
        <dbReference type="SAM" id="MobiDB-lite"/>
    </source>
</evidence>
<evidence type="ECO:0000305" key="4"/>